<gene>
    <name evidence="1" type="primary">alaS</name>
    <name type="ordered locus">BMA0895</name>
</gene>
<name>SYA_BURMA</name>
<organism>
    <name type="scientific">Burkholderia mallei (strain ATCC 23344)</name>
    <dbReference type="NCBI Taxonomy" id="243160"/>
    <lineage>
        <taxon>Bacteria</taxon>
        <taxon>Pseudomonadati</taxon>
        <taxon>Pseudomonadota</taxon>
        <taxon>Betaproteobacteria</taxon>
        <taxon>Burkholderiales</taxon>
        <taxon>Burkholderiaceae</taxon>
        <taxon>Burkholderia</taxon>
        <taxon>pseudomallei group</taxon>
    </lineage>
</organism>
<keyword id="KW-0030">Aminoacyl-tRNA synthetase</keyword>
<keyword id="KW-0067">ATP-binding</keyword>
<keyword id="KW-0963">Cytoplasm</keyword>
<keyword id="KW-0436">Ligase</keyword>
<keyword id="KW-0479">Metal-binding</keyword>
<keyword id="KW-0547">Nucleotide-binding</keyword>
<keyword id="KW-0648">Protein biosynthesis</keyword>
<keyword id="KW-1185">Reference proteome</keyword>
<keyword id="KW-0694">RNA-binding</keyword>
<keyword id="KW-0820">tRNA-binding</keyword>
<keyword id="KW-0862">Zinc</keyword>
<accession>Q62KZ3</accession>
<reference key="1">
    <citation type="journal article" date="2004" name="Proc. Natl. Acad. Sci. U.S.A.">
        <title>Structural flexibility in the Burkholderia mallei genome.</title>
        <authorList>
            <person name="Nierman W.C."/>
            <person name="DeShazer D."/>
            <person name="Kim H.S."/>
            <person name="Tettelin H."/>
            <person name="Nelson K.E."/>
            <person name="Feldblyum T.V."/>
            <person name="Ulrich R.L."/>
            <person name="Ronning C.M."/>
            <person name="Brinkac L.M."/>
            <person name="Daugherty S.C."/>
            <person name="Davidsen T.D."/>
            <person name="DeBoy R.T."/>
            <person name="Dimitrov G."/>
            <person name="Dodson R.J."/>
            <person name="Durkin A.S."/>
            <person name="Gwinn M.L."/>
            <person name="Haft D.H."/>
            <person name="Khouri H.M."/>
            <person name="Kolonay J.F."/>
            <person name="Madupu R."/>
            <person name="Mohammoud Y."/>
            <person name="Nelson W.C."/>
            <person name="Radune D."/>
            <person name="Romero C.M."/>
            <person name="Sarria S."/>
            <person name="Selengut J."/>
            <person name="Shamblin C."/>
            <person name="Sullivan S.A."/>
            <person name="White O."/>
            <person name="Yu Y."/>
            <person name="Zafar N."/>
            <person name="Zhou L."/>
            <person name="Fraser C.M."/>
        </authorList>
    </citation>
    <scope>NUCLEOTIDE SEQUENCE [LARGE SCALE GENOMIC DNA]</scope>
    <source>
        <strain>ATCC 23344</strain>
    </source>
</reference>
<feature type="chain" id="PRO_0000075081" description="Alanine--tRNA ligase">
    <location>
        <begin position="1"/>
        <end position="874"/>
    </location>
</feature>
<feature type="binding site" evidence="1">
    <location>
        <position position="564"/>
    </location>
    <ligand>
        <name>Zn(2+)</name>
        <dbReference type="ChEBI" id="CHEBI:29105"/>
    </ligand>
</feature>
<feature type="binding site" evidence="1">
    <location>
        <position position="568"/>
    </location>
    <ligand>
        <name>Zn(2+)</name>
        <dbReference type="ChEBI" id="CHEBI:29105"/>
    </ligand>
</feature>
<feature type="binding site" evidence="1">
    <location>
        <position position="665"/>
    </location>
    <ligand>
        <name>Zn(2+)</name>
        <dbReference type="ChEBI" id="CHEBI:29105"/>
    </ligand>
</feature>
<feature type="binding site" evidence="1">
    <location>
        <position position="669"/>
    </location>
    <ligand>
        <name>Zn(2+)</name>
        <dbReference type="ChEBI" id="CHEBI:29105"/>
    </ligand>
</feature>
<dbReference type="EC" id="6.1.1.7" evidence="1"/>
<dbReference type="EMBL" id="CP000010">
    <property type="protein sequence ID" value="AAU49074.1"/>
    <property type="molecule type" value="Genomic_DNA"/>
</dbReference>
<dbReference type="RefSeq" id="WP_004191158.1">
    <property type="nucleotide sequence ID" value="NC_006348.1"/>
</dbReference>
<dbReference type="RefSeq" id="YP_102626.1">
    <property type="nucleotide sequence ID" value="NC_006348.1"/>
</dbReference>
<dbReference type="SMR" id="Q62KZ3"/>
<dbReference type="GeneID" id="92978652"/>
<dbReference type="KEGG" id="bma:BMA0895"/>
<dbReference type="PATRIC" id="fig|243160.12.peg.927"/>
<dbReference type="eggNOG" id="COG0013">
    <property type="taxonomic scope" value="Bacteria"/>
</dbReference>
<dbReference type="HOGENOM" id="CLU_004485_1_1_4"/>
<dbReference type="Proteomes" id="UP000006693">
    <property type="component" value="Chromosome 1"/>
</dbReference>
<dbReference type="GO" id="GO:0005829">
    <property type="term" value="C:cytosol"/>
    <property type="evidence" value="ECO:0007669"/>
    <property type="project" value="TreeGrafter"/>
</dbReference>
<dbReference type="GO" id="GO:0004813">
    <property type="term" value="F:alanine-tRNA ligase activity"/>
    <property type="evidence" value="ECO:0007669"/>
    <property type="project" value="UniProtKB-UniRule"/>
</dbReference>
<dbReference type="GO" id="GO:0002161">
    <property type="term" value="F:aminoacyl-tRNA deacylase activity"/>
    <property type="evidence" value="ECO:0007669"/>
    <property type="project" value="TreeGrafter"/>
</dbReference>
<dbReference type="GO" id="GO:0005524">
    <property type="term" value="F:ATP binding"/>
    <property type="evidence" value="ECO:0007669"/>
    <property type="project" value="UniProtKB-UniRule"/>
</dbReference>
<dbReference type="GO" id="GO:0000049">
    <property type="term" value="F:tRNA binding"/>
    <property type="evidence" value="ECO:0007669"/>
    <property type="project" value="UniProtKB-KW"/>
</dbReference>
<dbReference type="GO" id="GO:0008270">
    <property type="term" value="F:zinc ion binding"/>
    <property type="evidence" value="ECO:0007669"/>
    <property type="project" value="UniProtKB-UniRule"/>
</dbReference>
<dbReference type="GO" id="GO:0006419">
    <property type="term" value="P:alanyl-tRNA aminoacylation"/>
    <property type="evidence" value="ECO:0007669"/>
    <property type="project" value="UniProtKB-UniRule"/>
</dbReference>
<dbReference type="GO" id="GO:0045892">
    <property type="term" value="P:negative regulation of DNA-templated transcription"/>
    <property type="evidence" value="ECO:0007669"/>
    <property type="project" value="TreeGrafter"/>
</dbReference>
<dbReference type="CDD" id="cd00673">
    <property type="entry name" value="AlaRS_core"/>
    <property type="match status" value="1"/>
</dbReference>
<dbReference type="FunFam" id="2.40.30.130:FF:000001">
    <property type="entry name" value="Alanine--tRNA ligase"/>
    <property type="match status" value="1"/>
</dbReference>
<dbReference type="FunFam" id="3.10.310.40:FF:000001">
    <property type="entry name" value="Alanine--tRNA ligase"/>
    <property type="match status" value="1"/>
</dbReference>
<dbReference type="FunFam" id="3.30.54.20:FF:000001">
    <property type="entry name" value="Alanine--tRNA ligase"/>
    <property type="match status" value="1"/>
</dbReference>
<dbReference type="FunFam" id="3.30.930.10:FF:000004">
    <property type="entry name" value="Alanine--tRNA ligase"/>
    <property type="match status" value="1"/>
</dbReference>
<dbReference type="FunFam" id="3.30.980.10:FF:000004">
    <property type="entry name" value="Alanine--tRNA ligase, cytoplasmic"/>
    <property type="match status" value="1"/>
</dbReference>
<dbReference type="Gene3D" id="2.40.30.130">
    <property type="match status" value="1"/>
</dbReference>
<dbReference type="Gene3D" id="3.10.310.40">
    <property type="match status" value="1"/>
</dbReference>
<dbReference type="Gene3D" id="3.30.54.20">
    <property type="match status" value="1"/>
</dbReference>
<dbReference type="Gene3D" id="6.10.250.550">
    <property type="match status" value="1"/>
</dbReference>
<dbReference type="Gene3D" id="3.30.930.10">
    <property type="entry name" value="Bira Bifunctional Protein, Domain 2"/>
    <property type="match status" value="1"/>
</dbReference>
<dbReference type="Gene3D" id="3.30.980.10">
    <property type="entry name" value="Threonyl-trna Synthetase, Chain A, domain 2"/>
    <property type="match status" value="1"/>
</dbReference>
<dbReference type="HAMAP" id="MF_00036_B">
    <property type="entry name" value="Ala_tRNA_synth_B"/>
    <property type="match status" value="1"/>
</dbReference>
<dbReference type="InterPro" id="IPR045864">
    <property type="entry name" value="aa-tRNA-synth_II/BPL/LPL"/>
</dbReference>
<dbReference type="InterPro" id="IPR002318">
    <property type="entry name" value="Ala-tRNA-lgiase_IIc"/>
</dbReference>
<dbReference type="InterPro" id="IPR018162">
    <property type="entry name" value="Ala-tRNA-ligase_IIc_anticod-bd"/>
</dbReference>
<dbReference type="InterPro" id="IPR018165">
    <property type="entry name" value="Ala-tRNA-synth_IIc_core"/>
</dbReference>
<dbReference type="InterPro" id="IPR018164">
    <property type="entry name" value="Ala-tRNA-synth_IIc_N"/>
</dbReference>
<dbReference type="InterPro" id="IPR050058">
    <property type="entry name" value="Ala-tRNA_ligase"/>
</dbReference>
<dbReference type="InterPro" id="IPR023033">
    <property type="entry name" value="Ala_tRNA_ligase_euk/bac"/>
</dbReference>
<dbReference type="InterPro" id="IPR003156">
    <property type="entry name" value="DHHA1_dom"/>
</dbReference>
<dbReference type="InterPro" id="IPR018163">
    <property type="entry name" value="Thr/Ala-tRNA-synth_IIc_edit"/>
</dbReference>
<dbReference type="InterPro" id="IPR009000">
    <property type="entry name" value="Transl_B-barrel_sf"/>
</dbReference>
<dbReference type="InterPro" id="IPR012947">
    <property type="entry name" value="tRNA_SAD"/>
</dbReference>
<dbReference type="NCBIfam" id="TIGR00344">
    <property type="entry name" value="alaS"/>
    <property type="match status" value="1"/>
</dbReference>
<dbReference type="PANTHER" id="PTHR11777:SF9">
    <property type="entry name" value="ALANINE--TRNA LIGASE, CYTOPLASMIC"/>
    <property type="match status" value="1"/>
</dbReference>
<dbReference type="PANTHER" id="PTHR11777">
    <property type="entry name" value="ALANYL-TRNA SYNTHETASE"/>
    <property type="match status" value="1"/>
</dbReference>
<dbReference type="Pfam" id="PF02272">
    <property type="entry name" value="DHHA1"/>
    <property type="match status" value="1"/>
</dbReference>
<dbReference type="Pfam" id="PF01411">
    <property type="entry name" value="tRNA-synt_2c"/>
    <property type="match status" value="1"/>
</dbReference>
<dbReference type="Pfam" id="PF07973">
    <property type="entry name" value="tRNA_SAD"/>
    <property type="match status" value="1"/>
</dbReference>
<dbReference type="PRINTS" id="PR00980">
    <property type="entry name" value="TRNASYNTHALA"/>
</dbReference>
<dbReference type="SMART" id="SM00863">
    <property type="entry name" value="tRNA_SAD"/>
    <property type="match status" value="1"/>
</dbReference>
<dbReference type="SUPFAM" id="SSF55681">
    <property type="entry name" value="Class II aaRS and biotin synthetases"/>
    <property type="match status" value="1"/>
</dbReference>
<dbReference type="SUPFAM" id="SSF101353">
    <property type="entry name" value="Putative anticodon-binding domain of alanyl-tRNA synthetase (AlaRS)"/>
    <property type="match status" value="1"/>
</dbReference>
<dbReference type="SUPFAM" id="SSF55186">
    <property type="entry name" value="ThrRS/AlaRS common domain"/>
    <property type="match status" value="1"/>
</dbReference>
<dbReference type="SUPFAM" id="SSF50447">
    <property type="entry name" value="Translation proteins"/>
    <property type="match status" value="1"/>
</dbReference>
<dbReference type="PROSITE" id="PS50860">
    <property type="entry name" value="AA_TRNA_LIGASE_II_ALA"/>
    <property type="match status" value="1"/>
</dbReference>
<evidence type="ECO:0000255" key="1">
    <source>
        <dbReference type="HAMAP-Rule" id="MF_00036"/>
    </source>
</evidence>
<sequence>MKAAEIREKFLKFFESKGHTIVRSSSLVPGNDPTLLFTNSGMVQFKDVFLGAETRPYSRATTAQRSVRAGGKHNDLENVGYTARHHTFFEMLGNFSFGDYFKRDAIHYAWELLTSVYKLPADKLWVTVYHDDDEAYDIWAKEVGVPAERIIRIGDNKGARYASDNFWQMGDTGPCGPCSEIFYDHGPDVWGGPPGSPEEDGDRYIEIWNLVFMQFNRDAQGNMTRLPKPCVDTGMGLERIAAVLQHVHSNYEIDLFQQLIKASARETGVADLANNSLKVIADHIRACSFLIVDGVIPGNEGRGYVLRRIVRRAIRHGYKLGRKAPFFHKLVADLVAEMGAAYPELKEAEPRVTDVLRQEEERFFETIEHGMSILEAALAELDAAGGKTLDGELAFKLHDTYGFPLDLTADVCRERGVTVDEPAFDDAMARQREQARAAGKFKATQGLEYTGAKTTFHGYEEIAFDDAKVVALYVEGASVGEVKAGESAVVVLDHTPFYAESGGQVGDQGVLANAATRFAVGDTLKVQADVIGHHGELEQGTLKVGDVVRAEIDAARRARTARNHSATHLMHKALRDVLGSHVQQKGSLVDADKTRFDFAHNAPLTDDEIRRVEAIVNEQVLANAPGIVRVMPYDDAVKGGAMALFGEKYGDEVRVLDLGFSRELCGGTHVHRTGDIGLFKIVAEGGVAAGIRRVEAITGDNAVRYVQALDARVNAAAAALKAQPSELLQRIGQVQDQVKSLEKELGALKSKLASSQGDELAQQAVEVGGVHVLAATLDGADAKTLRETVDKLKDKLKSAAIVLAAVDGGKVSLIAGVTADASKKVKAGELVNFVAQQVGGKGGGRSDMAQAGGTEPAKLPAALAGVKGWVEARL</sequence>
<protein>
    <recommendedName>
        <fullName evidence="1">Alanine--tRNA ligase</fullName>
        <ecNumber evidence="1">6.1.1.7</ecNumber>
    </recommendedName>
    <alternativeName>
        <fullName evidence="1">Alanyl-tRNA synthetase</fullName>
        <shortName evidence="1">AlaRS</shortName>
    </alternativeName>
</protein>
<comment type="function">
    <text evidence="1">Catalyzes the attachment of alanine to tRNA(Ala) in a two-step reaction: alanine is first activated by ATP to form Ala-AMP and then transferred to the acceptor end of tRNA(Ala). Also edits incorrectly charged Ser-tRNA(Ala) and Gly-tRNA(Ala) via its editing domain.</text>
</comment>
<comment type="catalytic activity">
    <reaction evidence="1">
        <text>tRNA(Ala) + L-alanine + ATP = L-alanyl-tRNA(Ala) + AMP + diphosphate</text>
        <dbReference type="Rhea" id="RHEA:12540"/>
        <dbReference type="Rhea" id="RHEA-COMP:9657"/>
        <dbReference type="Rhea" id="RHEA-COMP:9923"/>
        <dbReference type="ChEBI" id="CHEBI:30616"/>
        <dbReference type="ChEBI" id="CHEBI:33019"/>
        <dbReference type="ChEBI" id="CHEBI:57972"/>
        <dbReference type="ChEBI" id="CHEBI:78442"/>
        <dbReference type="ChEBI" id="CHEBI:78497"/>
        <dbReference type="ChEBI" id="CHEBI:456215"/>
        <dbReference type="EC" id="6.1.1.7"/>
    </reaction>
</comment>
<comment type="cofactor">
    <cofactor evidence="1">
        <name>Zn(2+)</name>
        <dbReference type="ChEBI" id="CHEBI:29105"/>
    </cofactor>
    <text evidence="1">Binds 1 zinc ion per subunit.</text>
</comment>
<comment type="subcellular location">
    <subcellularLocation>
        <location evidence="1">Cytoplasm</location>
    </subcellularLocation>
</comment>
<comment type="domain">
    <text evidence="1">Consists of three domains; the N-terminal catalytic domain, the editing domain and the C-terminal C-Ala domain. The editing domain removes incorrectly charged amino acids, while the C-Ala domain, along with tRNA(Ala), serves as a bridge to cooperatively bring together the editing and aminoacylation centers thus stimulating deacylation of misacylated tRNAs.</text>
</comment>
<comment type="similarity">
    <text evidence="1">Belongs to the class-II aminoacyl-tRNA synthetase family.</text>
</comment>
<proteinExistence type="inferred from homology"/>